<keyword id="KW-0028">Amino-acid biosynthesis</keyword>
<keyword id="KW-0057">Aromatic amino acid biosynthesis</keyword>
<keyword id="KW-0521">NADP</keyword>
<keyword id="KW-0560">Oxidoreductase</keyword>
<keyword id="KW-1185">Reference proteome</keyword>
<dbReference type="EC" id="1.1.1.25" evidence="1"/>
<dbReference type="EMBL" id="CP000468">
    <property type="protein sequence ID" value="ABJ02763.1"/>
    <property type="molecule type" value="Genomic_DNA"/>
</dbReference>
<dbReference type="RefSeq" id="WP_000451230.1">
    <property type="nucleotide sequence ID" value="NZ_CADILS010000044.1"/>
</dbReference>
<dbReference type="SMR" id="A1AGH3"/>
<dbReference type="KEGG" id="ecv:APECO1_3165"/>
<dbReference type="HOGENOM" id="CLU_044063_2_1_6"/>
<dbReference type="UniPathway" id="UPA00053">
    <property type="reaction ID" value="UER00087"/>
</dbReference>
<dbReference type="Proteomes" id="UP000008216">
    <property type="component" value="Chromosome"/>
</dbReference>
<dbReference type="GO" id="GO:0005829">
    <property type="term" value="C:cytosol"/>
    <property type="evidence" value="ECO:0007669"/>
    <property type="project" value="TreeGrafter"/>
</dbReference>
<dbReference type="GO" id="GO:0050661">
    <property type="term" value="F:NADP binding"/>
    <property type="evidence" value="ECO:0007669"/>
    <property type="project" value="InterPro"/>
</dbReference>
<dbReference type="GO" id="GO:0004764">
    <property type="term" value="F:shikimate 3-dehydrogenase (NADP+) activity"/>
    <property type="evidence" value="ECO:0007669"/>
    <property type="project" value="UniProtKB-UniRule"/>
</dbReference>
<dbReference type="GO" id="GO:0008652">
    <property type="term" value="P:amino acid biosynthetic process"/>
    <property type="evidence" value="ECO:0007669"/>
    <property type="project" value="UniProtKB-KW"/>
</dbReference>
<dbReference type="GO" id="GO:0009073">
    <property type="term" value="P:aromatic amino acid family biosynthetic process"/>
    <property type="evidence" value="ECO:0007669"/>
    <property type="project" value="UniProtKB-KW"/>
</dbReference>
<dbReference type="GO" id="GO:0009423">
    <property type="term" value="P:chorismate biosynthetic process"/>
    <property type="evidence" value="ECO:0007669"/>
    <property type="project" value="UniProtKB-UniRule"/>
</dbReference>
<dbReference type="GO" id="GO:0019632">
    <property type="term" value="P:shikimate metabolic process"/>
    <property type="evidence" value="ECO:0007669"/>
    <property type="project" value="InterPro"/>
</dbReference>
<dbReference type="CDD" id="cd01065">
    <property type="entry name" value="NAD_bind_Shikimate_DH"/>
    <property type="match status" value="1"/>
</dbReference>
<dbReference type="FunFam" id="3.40.50.10860:FF:000006">
    <property type="entry name" value="Shikimate dehydrogenase (NADP(+))"/>
    <property type="match status" value="1"/>
</dbReference>
<dbReference type="FunFam" id="3.40.50.720:FF:000104">
    <property type="entry name" value="Shikimate dehydrogenase (NADP(+))"/>
    <property type="match status" value="1"/>
</dbReference>
<dbReference type="Gene3D" id="3.40.50.10860">
    <property type="entry name" value="Leucine Dehydrogenase, chain A, domain 1"/>
    <property type="match status" value="1"/>
</dbReference>
<dbReference type="Gene3D" id="3.40.50.720">
    <property type="entry name" value="NAD(P)-binding Rossmann-like Domain"/>
    <property type="match status" value="1"/>
</dbReference>
<dbReference type="HAMAP" id="MF_00222">
    <property type="entry name" value="Shikimate_DH_AroE"/>
    <property type="match status" value="1"/>
</dbReference>
<dbReference type="InterPro" id="IPR046346">
    <property type="entry name" value="Aminoacid_DH-like_N_sf"/>
</dbReference>
<dbReference type="InterPro" id="IPR036291">
    <property type="entry name" value="NAD(P)-bd_dom_sf"/>
</dbReference>
<dbReference type="InterPro" id="IPR041121">
    <property type="entry name" value="SDH_C"/>
</dbReference>
<dbReference type="InterPro" id="IPR011342">
    <property type="entry name" value="Shikimate_DH"/>
</dbReference>
<dbReference type="InterPro" id="IPR013708">
    <property type="entry name" value="Shikimate_DH-bd_N"/>
</dbReference>
<dbReference type="InterPro" id="IPR022893">
    <property type="entry name" value="Shikimate_DH_fam"/>
</dbReference>
<dbReference type="InterPro" id="IPR006151">
    <property type="entry name" value="Shikm_DH/Glu-tRNA_Rdtase"/>
</dbReference>
<dbReference type="NCBIfam" id="TIGR00507">
    <property type="entry name" value="aroE"/>
    <property type="match status" value="1"/>
</dbReference>
<dbReference type="NCBIfam" id="NF001310">
    <property type="entry name" value="PRK00258.1-2"/>
    <property type="match status" value="1"/>
</dbReference>
<dbReference type="PANTHER" id="PTHR21089:SF1">
    <property type="entry name" value="BIFUNCTIONAL 3-DEHYDROQUINATE DEHYDRATASE_SHIKIMATE DEHYDROGENASE, CHLOROPLASTIC"/>
    <property type="match status" value="1"/>
</dbReference>
<dbReference type="PANTHER" id="PTHR21089">
    <property type="entry name" value="SHIKIMATE DEHYDROGENASE"/>
    <property type="match status" value="1"/>
</dbReference>
<dbReference type="Pfam" id="PF18317">
    <property type="entry name" value="SDH_C"/>
    <property type="match status" value="1"/>
</dbReference>
<dbReference type="Pfam" id="PF01488">
    <property type="entry name" value="Shikimate_DH"/>
    <property type="match status" value="1"/>
</dbReference>
<dbReference type="Pfam" id="PF08501">
    <property type="entry name" value="Shikimate_dh_N"/>
    <property type="match status" value="1"/>
</dbReference>
<dbReference type="SUPFAM" id="SSF53223">
    <property type="entry name" value="Aminoacid dehydrogenase-like, N-terminal domain"/>
    <property type="match status" value="1"/>
</dbReference>
<dbReference type="SUPFAM" id="SSF51735">
    <property type="entry name" value="NAD(P)-binding Rossmann-fold domains"/>
    <property type="match status" value="1"/>
</dbReference>
<sequence length="272" mass="29409">METYAVFGNPIAHSKSPFIHQQFAQQLNIEHPYGRVLAPINDFINTLNAFFSAGGKGANVTVPFKEEAFARADELTERAALAGAVNTLKRLEDGRLLGDNTDGIGLLSDLERLSFIRPGLRILLIGAGGASRGVLLPLLSLDCAVTITNRTVSRAEELTKLFAHTGSIQALGMDELEGHEFDLIINATSSGISGDIPAIPSSLIHPGIYCYDMFYQKGKTPFLAWCEQRGSKRNADGLGMLVAQAAHAFLLWHGVLPDVEPVIKLLQQELSA</sequence>
<protein>
    <recommendedName>
        <fullName evidence="1">Shikimate dehydrogenase (NADP(+))</fullName>
        <shortName evidence="1">SDH</shortName>
        <ecNumber evidence="1">1.1.1.25</ecNumber>
    </recommendedName>
</protein>
<evidence type="ECO:0000255" key="1">
    <source>
        <dbReference type="HAMAP-Rule" id="MF_00222"/>
    </source>
</evidence>
<accession>A1AGH3</accession>
<organism>
    <name type="scientific">Escherichia coli O1:K1 / APEC</name>
    <dbReference type="NCBI Taxonomy" id="405955"/>
    <lineage>
        <taxon>Bacteria</taxon>
        <taxon>Pseudomonadati</taxon>
        <taxon>Pseudomonadota</taxon>
        <taxon>Gammaproteobacteria</taxon>
        <taxon>Enterobacterales</taxon>
        <taxon>Enterobacteriaceae</taxon>
        <taxon>Escherichia</taxon>
    </lineage>
</organism>
<reference key="1">
    <citation type="journal article" date="2007" name="J. Bacteriol.">
        <title>The genome sequence of avian pathogenic Escherichia coli strain O1:K1:H7 shares strong similarities with human extraintestinal pathogenic E. coli genomes.</title>
        <authorList>
            <person name="Johnson T.J."/>
            <person name="Kariyawasam S."/>
            <person name="Wannemuehler Y."/>
            <person name="Mangiamele P."/>
            <person name="Johnson S.J."/>
            <person name="Doetkott C."/>
            <person name="Skyberg J.A."/>
            <person name="Lynne A.M."/>
            <person name="Johnson J.R."/>
            <person name="Nolan L.K."/>
        </authorList>
    </citation>
    <scope>NUCLEOTIDE SEQUENCE [LARGE SCALE GENOMIC DNA]</scope>
</reference>
<name>AROE_ECOK1</name>
<gene>
    <name evidence="1" type="primary">aroE</name>
    <name type="ordered locus">Ecok1_32690</name>
    <name type="ORF">APECO1_3165</name>
</gene>
<comment type="function">
    <text evidence="1">Involved in the biosynthesis of the chorismate, which leads to the biosynthesis of aromatic amino acids. Catalyzes the reversible NADPH linked reduction of 3-dehydroshikimate (DHSA) to yield shikimate (SA).</text>
</comment>
<comment type="catalytic activity">
    <reaction evidence="1">
        <text>shikimate + NADP(+) = 3-dehydroshikimate + NADPH + H(+)</text>
        <dbReference type="Rhea" id="RHEA:17737"/>
        <dbReference type="ChEBI" id="CHEBI:15378"/>
        <dbReference type="ChEBI" id="CHEBI:16630"/>
        <dbReference type="ChEBI" id="CHEBI:36208"/>
        <dbReference type="ChEBI" id="CHEBI:57783"/>
        <dbReference type="ChEBI" id="CHEBI:58349"/>
        <dbReference type="EC" id="1.1.1.25"/>
    </reaction>
</comment>
<comment type="pathway">
    <text evidence="1">Metabolic intermediate biosynthesis; chorismate biosynthesis; chorismate from D-erythrose 4-phosphate and phosphoenolpyruvate: step 4/7.</text>
</comment>
<comment type="subunit">
    <text evidence="1">Homodimer.</text>
</comment>
<comment type="similarity">
    <text evidence="1">Belongs to the shikimate dehydrogenase family.</text>
</comment>
<feature type="chain" id="PRO_1000021281" description="Shikimate dehydrogenase (NADP(+))">
    <location>
        <begin position="1"/>
        <end position="272"/>
    </location>
</feature>
<feature type="active site" description="Proton acceptor" evidence="1">
    <location>
        <position position="65"/>
    </location>
</feature>
<feature type="binding site" evidence="1">
    <location>
        <begin position="14"/>
        <end position="16"/>
    </location>
    <ligand>
        <name>shikimate</name>
        <dbReference type="ChEBI" id="CHEBI:36208"/>
    </ligand>
</feature>
<feature type="binding site" evidence="1">
    <location>
        <position position="61"/>
    </location>
    <ligand>
        <name>shikimate</name>
        <dbReference type="ChEBI" id="CHEBI:36208"/>
    </ligand>
</feature>
<feature type="binding site" evidence="1">
    <location>
        <position position="77"/>
    </location>
    <ligand>
        <name>NADP(+)</name>
        <dbReference type="ChEBI" id="CHEBI:58349"/>
    </ligand>
</feature>
<feature type="binding site" evidence="1">
    <location>
        <position position="86"/>
    </location>
    <ligand>
        <name>shikimate</name>
        <dbReference type="ChEBI" id="CHEBI:36208"/>
    </ligand>
</feature>
<feature type="binding site" evidence="1">
    <location>
        <position position="102"/>
    </location>
    <ligand>
        <name>shikimate</name>
        <dbReference type="ChEBI" id="CHEBI:36208"/>
    </ligand>
</feature>
<feature type="binding site" evidence="1">
    <location>
        <begin position="126"/>
        <end position="130"/>
    </location>
    <ligand>
        <name>NADP(+)</name>
        <dbReference type="ChEBI" id="CHEBI:58349"/>
    </ligand>
</feature>
<feature type="binding site" evidence="1">
    <location>
        <begin position="149"/>
        <end position="154"/>
    </location>
    <ligand>
        <name>NADP(+)</name>
        <dbReference type="ChEBI" id="CHEBI:58349"/>
    </ligand>
</feature>
<feature type="binding site" evidence="1">
    <location>
        <position position="213"/>
    </location>
    <ligand>
        <name>NADP(+)</name>
        <dbReference type="ChEBI" id="CHEBI:58349"/>
    </ligand>
</feature>
<feature type="binding site" evidence="1">
    <location>
        <position position="215"/>
    </location>
    <ligand>
        <name>shikimate</name>
        <dbReference type="ChEBI" id="CHEBI:36208"/>
    </ligand>
</feature>
<feature type="binding site" evidence="1">
    <location>
        <position position="237"/>
    </location>
    <ligand>
        <name>NADP(+)</name>
        <dbReference type="ChEBI" id="CHEBI:58349"/>
    </ligand>
</feature>
<proteinExistence type="inferred from homology"/>